<accession>A1BJF6</accession>
<proteinExistence type="inferred from homology"/>
<evidence type="ECO:0000255" key="1">
    <source>
        <dbReference type="HAMAP-Rule" id="MF_00384"/>
    </source>
</evidence>
<protein>
    <recommendedName>
        <fullName evidence="1">Homoserine kinase</fullName>
        <shortName evidence="1">HK</shortName>
        <shortName evidence="1">HSK</shortName>
        <ecNumber evidence="1">2.7.1.39</ecNumber>
    </recommendedName>
</protein>
<gene>
    <name evidence="1" type="primary">thrB</name>
    <name type="ordered locus">Cpha266_2545</name>
</gene>
<reference key="1">
    <citation type="submission" date="2006-12" db="EMBL/GenBank/DDBJ databases">
        <title>Complete sequence of Chlorobium phaeobacteroides DSM 266.</title>
        <authorList>
            <consortium name="US DOE Joint Genome Institute"/>
            <person name="Copeland A."/>
            <person name="Lucas S."/>
            <person name="Lapidus A."/>
            <person name="Barry K."/>
            <person name="Detter J.C."/>
            <person name="Glavina del Rio T."/>
            <person name="Hammon N."/>
            <person name="Israni S."/>
            <person name="Pitluck S."/>
            <person name="Goltsman E."/>
            <person name="Schmutz J."/>
            <person name="Larimer F."/>
            <person name="Land M."/>
            <person name="Hauser L."/>
            <person name="Mikhailova N."/>
            <person name="Li T."/>
            <person name="Overmann J."/>
            <person name="Bryant D.A."/>
            <person name="Richardson P."/>
        </authorList>
    </citation>
    <scope>NUCLEOTIDE SEQUENCE [LARGE SCALE GENOMIC DNA]</scope>
    <source>
        <strain>DSM 266 / SMG 266 / 2430</strain>
    </source>
</reference>
<name>KHSE_CHLPD</name>
<sequence>MKTVRGFASATVGNVACGFDVLGFAITEPGDEVILTLHEERKSECPVSITAISGDGGALPLDPKKNTSSFVVLKFLEYIRTSKGIDFKGHIDLELKKNLPLSSGMGSSAASAAAALAAANELLGQPCSKMELVHFAVEGERVACGSAHADNAAPAILGNFVLIRSYAPLDLITIPSPEHLFCTLVHPHTELKTSFARSVLPRSIPLKTATQQWGNVGALIAGLLKSDYDLIGRALVDVVAEPKRAPLIPGFLDVKHAAIDCGALGCSIAGSGPSVFAFSSSKETAERVGQAMREAFLLPETNLKSDMWVSPICKEGAKVL</sequence>
<dbReference type="EC" id="2.7.1.39" evidence="1"/>
<dbReference type="EMBL" id="CP000492">
    <property type="protein sequence ID" value="ABL66533.1"/>
    <property type="molecule type" value="Genomic_DNA"/>
</dbReference>
<dbReference type="RefSeq" id="WP_011746310.1">
    <property type="nucleotide sequence ID" value="NC_008639.1"/>
</dbReference>
<dbReference type="SMR" id="A1BJF6"/>
<dbReference type="STRING" id="290317.Cpha266_2545"/>
<dbReference type="KEGG" id="cph:Cpha266_2545"/>
<dbReference type="eggNOG" id="COG0083">
    <property type="taxonomic scope" value="Bacteria"/>
</dbReference>
<dbReference type="HOGENOM" id="CLU_041243_1_1_10"/>
<dbReference type="OrthoDB" id="9769912at2"/>
<dbReference type="UniPathway" id="UPA00050">
    <property type="reaction ID" value="UER00064"/>
</dbReference>
<dbReference type="Proteomes" id="UP000008701">
    <property type="component" value="Chromosome"/>
</dbReference>
<dbReference type="GO" id="GO:0005737">
    <property type="term" value="C:cytoplasm"/>
    <property type="evidence" value="ECO:0007669"/>
    <property type="project" value="UniProtKB-SubCell"/>
</dbReference>
<dbReference type="GO" id="GO:0005524">
    <property type="term" value="F:ATP binding"/>
    <property type="evidence" value="ECO:0007669"/>
    <property type="project" value="UniProtKB-UniRule"/>
</dbReference>
<dbReference type="GO" id="GO:0004413">
    <property type="term" value="F:homoserine kinase activity"/>
    <property type="evidence" value="ECO:0007669"/>
    <property type="project" value="UniProtKB-UniRule"/>
</dbReference>
<dbReference type="GO" id="GO:0009088">
    <property type="term" value="P:threonine biosynthetic process"/>
    <property type="evidence" value="ECO:0007669"/>
    <property type="project" value="UniProtKB-UniRule"/>
</dbReference>
<dbReference type="Gene3D" id="3.30.230.10">
    <property type="match status" value="1"/>
</dbReference>
<dbReference type="Gene3D" id="3.30.70.890">
    <property type="entry name" value="GHMP kinase, C-terminal domain"/>
    <property type="match status" value="1"/>
</dbReference>
<dbReference type="HAMAP" id="MF_00384">
    <property type="entry name" value="Homoser_kinase"/>
    <property type="match status" value="1"/>
</dbReference>
<dbReference type="InterPro" id="IPR013750">
    <property type="entry name" value="GHMP_kinase_C_dom"/>
</dbReference>
<dbReference type="InterPro" id="IPR036554">
    <property type="entry name" value="GHMP_kinase_C_sf"/>
</dbReference>
<dbReference type="InterPro" id="IPR006204">
    <property type="entry name" value="GHMP_kinase_N_dom"/>
</dbReference>
<dbReference type="InterPro" id="IPR006203">
    <property type="entry name" value="GHMP_knse_ATP-bd_CS"/>
</dbReference>
<dbReference type="InterPro" id="IPR000870">
    <property type="entry name" value="Homoserine_kinase"/>
</dbReference>
<dbReference type="InterPro" id="IPR020568">
    <property type="entry name" value="Ribosomal_Su5_D2-typ_SF"/>
</dbReference>
<dbReference type="InterPro" id="IPR014721">
    <property type="entry name" value="Ribsml_uS5_D2-typ_fold_subgr"/>
</dbReference>
<dbReference type="NCBIfam" id="NF002288">
    <property type="entry name" value="PRK01212.1-4"/>
    <property type="match status" value="1"/>
</dbReference>
<dbReference type="NCBIfam" id="TIGR00191">
    <property type="entry name" value="thrB"/>
    <property type="match status" value="1"/>
</dbReference>
<dbReference type="PANTHER" id="PTHR20861:SF1">
    <property type="entry name" value="HOMOSERINE KINASE"/>
    <property type="match status" value="1"/>
</dbReference>
<dbReference type="PANTHER" id="PTHR20861">
    <property type="entry name" value="HOMOSERINE/4-DIPHOSPHOCYTIDYL-2-C-METHYL-D-ERYTHRITOL KINASE"/>
    <property type="match status" value="1"/>
</dbReference>
<dbReference type="Pfam" id="PF08544">
    <property type="entry name" value="GHMP_kinases_C"/>
    <property type="match status" value="1"/>
</dbReference>
<dbReference type="Pfam" id="PF00288">
    <property type="entry name" value="GHMP_kinases_N"/>
    <property type="match status" value="1"/>
</dbReference>
<dbReference type="PIRSF" id="PIRSF000676">
    <property type="entry name" value="Homoser_kin"/>
    <property type="match status" value="1"/>
</dbReference>
<dbReference type="PRINTS" id="PR00958">
    <property type="entry name" value="HOMSERKINASE"/>
</dbReference>
<dbReference type="SUPFAM" id="SSF55060">
    <property type="entry name" value="GHMP Kinase, C-terminal domain"/>
    <property type="match status" value="1"/>
</dbReference>
<dbReference type="SUPFAM" id="SSF54211">
    <property type="entry name" value="Ribosomal protein S5 domain 2-like"/>
    <property type="match status" value="1"/>
</dbReference>
<dbReference type="PROSITE" id="PS00627">
    <property type="entry name" value="GHMP_KINASES_ATP"/>
    <property type="match status" value="1"/>
</dbReference>
<organism>
    <name type="scientific">Chlorobium phaeobacteroides (strain DSM 266 / SMG 266 / 2430)</name>
    <dbReference type="NCBI Taxonomy" id="290317"/>
    <lineage>
        <taxon>Bacteria</taxon>
        <taxon>Pseudomonadati</taxon>
        <taxon>Chlorobiota</taxon>
        <taxon>Chlorobiia</taxon>
        <taxon>Chlorobiales</taxon>
        <taxon>Chlorobiaceae</taxon>
        <taxon>Chlorobium/Pelodictyon group</taxon>
        <taxon>Chlorobium</taxon>
    </lineage>
</organism>
<keyword id="KW-0028">Amino-acid biosynthesis</keyword>
<keyword id="KW-0067">ATP-binding</keyword>
<keyword id="KW-0963">Cytoplasm</keyword>
<keyword id="KW-0418">Kinase</keyword>
<keyword id="KW-0547">Nucleotide-binding</keyword>
<keyword id="KW-1185">Reference proteome</keyword>
<keyword id="KW-0791">Threonine biosynthesis</keyword>
<keyword id="KW-0808">Transferase</keyword>
<feature type="chain" id="PRO_1000049120" description="Homoserine kinase">
    <location>
        <begin position="1"/>
        <end position="320"/>
    </location>
</feature>
<feature type="binding site" evidence="1">
    <location>
        <begin position="100"/>
        <end position="110"/>
    </location>
    <ligand>
        <name>ATP</name>
        <dbReference type="ChEBI" id="CHEBI:30616"/>
    </ligand>
</feature>
<comment type="function">
    <text evidence="1">Catalyzes the ATP-dependent phosphorylation of L-homoserine to L-homoserine phosphate.</text>
</comment>
<comment type="catalytic activity">
    <reaction evidence="1">
        <text>L-homoserine + ATP = O-phospho-L-homoserine + ADP + H(+)</text>
        <dbReference type="Rhea" id="RHEA:13985"/>
        <dbReference type="ChEBI" id="CHEBI:15378"/>
        <dbReference type="ChEBI" id="CHEBI:30616"/>
        <dbReference type="ChEBI" id="CHEBI:57476"/>
        <dbReference type="ChEBI" id="CHEBI:57590"/>
        <dbReference type="ChEBI" id="CHEBI:456216"/>
        <dbReference type="EC" id="2.7.1.39"/>
    </reaction>
</comment>
<comment type="pathway">
    <text evidence="1">Amino-acid biosynthesis; L-threonine biosynthesis; L-threonine from L-aspartate: step 4/5.</text>
</comment>
<comment type="subcellular location">
    <subcellularLocation>
        <location evidence="1">Cytoplasm</location>
    </subcellularLocation>
</comment>
<comment type="similarity">
    <text evidence="1">Belongs to the GHMP kinase family. Homoserine kinase subfamily.</text>
</comment>